<evidence type="ECO:0000255" key="1">
    <source>
        <dbReference type="HAMAP-Rule" id="MF_00185"/>
    </source>
</evidence>
<gene>
    <name evidence="1" type="primary">miaA</name>
    <name type="ordered locus">ABSDF1624</name>
</gene>
<proteinExistence type="inferred from homology"/>
<keyword id="KW-0067">ATP-binding</keyword>
<keyword id="KW-0460">Magnesium</keyword>
<keyword id="KW-0547">Nucleotide-binding</keyword>
<keyword id="KW-0808">Transferase</keyword>
<keyword id="KW-0819">tRNA processing</keyword>
<sequence>MSNQLPVINLMGPTASGKTALACELYERGNFELISVDSALVYKDMDIGTAKPTREEQELYPHHLIDIITPLEVYSAAQFVEDACALIDEMHSRGKTPILVGGTMLYFKALLEGLSSNLPSADANVRAAIEEKAANEGWQAVYDELVAVDPAAGVKFKVSDKQRIIRALEVYHITGQPITKLQAEQPKNVPYRYTFHNYALLPDRVELHQRIEQRLSKMWDIGFLSEVESLIEKYDLDENLPSMRSVGYRQALEFLLKSDMSLKKKQEMEDKALFATRQLAKRQYTWLRSLQEIHDFKTYLTIKQAKEDLRNSYG</sequence>
<dbReference type="EC" id="2.5.1.75" evidence="1"/>
<dbReference type="EMBL" id="CU468230">
    <property type="protein sequence ID" value="CAP00964.1"/>
    <property type="molecule type" value="Genomic_DNA"/>
</dbReference>
<dbReference type="SMR" id="B0VM64"/>
<dbReference type="KEGG" id="abm:ABSDF1624"/>
<dbReference type="HOGENOM" id="CLU_032616_0_0_6"/>
<dbReference type="Proteomes" id="UP000001741">
    <property type="component" value="Chromosome"/>
</dbReference>
<dbReference type="GO" id="GO:0005524">
    <property type="term" value="F:ATP binding"/>
    <property type="evidence" value="ECO:0007669"/>
    <property type="project" value="UniProtKB-UniRule"/>
</dbReference>
<dbReference type="GO" id="GO:0052381">
    <property type="term" value="F:tRNA dimethylallyltransferase activity"/>
    <property type="evidence" value="ECO:0007669"/>
    <property type="project" value="UniProtKB-UniRule"/>
</dbReference>
<dbReference type="GO" id="GO:0006400">
    <property type="term" value="P:tRNA modification"/>
    <property type="evidence" value="ECO:0007669"/>
    <property type="project" value="TreeGrafter"/>
</dbReference>
<dbReference type="FunFam" id="1.10.20.140:FF:000001">
    <property type="entry name" value="tRNA dimethylallyltransferase"/>
    <property type="match status" value="1"/>
</dbReference>
<dbReference type="Gene3D" id="1.10.20.140">
    <property type="match status" value="1"/>
</dbReference>
<dbReference type="Gene3D" id="3.40.50.300">
    <property type="entry name" value="P-loop containing nucleotide triphosphate hydrolases"/>
    <property type="match status" value="1"/>
</dbReference>
<dbReference type="HAMAP" id="MF_00185">
    <property type="entry name" value="IPP_trans"/>
    <property type="match status" value="1"/>
</dbReference>
<dbReference type="InterPro" id="IPR039657">
    <property type="entry name" value="Dimethylallyltransferase"/>
</dbReference>
<dbReference type="InterPro" id="IPR018022">
    <property type="entry name" value="IPT"/>
</dbReference>
<dbReference type="InterPro" id="IPR027417">
    <property type="entry name" value="P-loop_NTPase"/>
</dbReference>
<dbReference type="NCBIfam" id="TIGR00174">
    <property type="entry name" value="miaA"/>
    <property type="match status" value="1"/>
</dbReference>
<dbReference type="PANTHER" id="PTHR11088">
    <property type="entry name" value="TRNA DIMETHYLALLYLTRANSFERASE"/>
    <property type="match status" value="1"/>
</dbReference>
<dbReference type="PANTHER" id="PTHR11088:SF60">
    <property type="entry name" value="TRNA DIMETHYLALLYLTRANSFERASE"/>
    <property type="match status" value="1"/>
</dbReference>
<dbReference type="Pfam" id="PF01715">
    <property type="entry name" value="IPPT"/>
    <property type="match status" value="1"/>
</dbReference>
<dbReference type="SUPFAM" id="SSF52540">
    <property type="entry name" value="P-loop containing nucleoside triphosphate hydrolases"/>
    <property type="match status" value="2"/>
</dbReference>
<accession>B0VM64</accession>
<protein>
    <recommendedName>
        <fullName evidence="1">tRNA dimethylallyltransferase</fullName>
        <ecNumber evidence="1">2.5.1.75</ecNumber>
    </recommendedName>
    <alternativeName>
        <fullName evidence="1">Dimethylallyl diphosphate:tRNA dimethylallyltransferase</fullName>
        <shortName evidence="1">DMAPP:tRNA dimethylallyltransferase</shortName>
        <shortName evidence="1">DMATase</shortName>
    </alternativeName>
    <alternativeName>
        <fullName evidence="1">Isopentenyl-diphosphate:tRNA isopentenyltransferase</fullName>
        <shortName evidence="1">IPP transferase</shortName>
        <shortName evidence="1">IPPT</shortName>
        <shortName evidence="1">IPTase</shortName>
    </alternativeName>
</protein>
<feature type="chain" id="PRO_1000098635" description="tRNA dimethylallyltransferase">
    <location>
        <begin position="1"/>
        <end position="314"/>
    </location>
</feature>
<feature type="region of interest" description="Interaction with substrate tRNA" evidence="1">
    <location>
        <begin position="37"/>
        <end position="40"/>
    </location>
</feature>
<feature type="region of interest" description="Interaction with substrate tRNA" evidence="1">
    <location>
        <begin position="162"/>
        <end position="166"/>
    </location>
</feature>
<feature type="binding site" evidence="1">
    <location>
        <begin position="12"/>
        <end position="19"/>
    </location>
    <ligand>
        <name>ATP</name>
        <dbReference type="ChEBI" id="CHEBI:30616"/>
    </ligand>
</feature>
<feature type="binding site" evidence="1">
    <location>
        <begin position="14"/>
        <end position="19"/>
    </location>
    <ligand>
        <name>substrate</name>
    </ligand>
</feature>
<feature type="site" description="Interaction with substrate tRNA" evidence="1">
    <location>
        <position position="103"/>
    </location>
</feature>
<feature type="site" description="Interaction with substrate tRNA" evidence="1">
    <location>
        <position position="126"/>
    </location>
</feature>
<comment type="function">
    <text evidence="1">Catalyzes the transfer of a dimethylallyl group onto the adenine at position 37 in tRNAs that read codons beginning with uridine, leading to the formation of N6-(dimethylallyl)adenosine (i(6)A).</text>
</comment>
<comment type="catalytic activity">
    <reaction evidence="1">
        <text>adenosine(37) in tRNA + dimethylallyl diphosphate = N(6)-dimethylallyladenosine(37) in tRNA + diphosphate</text>
        <dbReference type="Rhea" id="RHEA:26482"/>
        <dbReference type="Rhea" id="RHEA-COMP:10162"/>
        <dbReference type="Rhea" id="RHEA-COMP:10375"/>
        <dbReference type="ChEBI" id="CHEBI:33019"/>
        <dbReference type="ChEBI" id="CHEBI:57623"/>
        <dbReference type="ChEBI" id="CHEBI:74411"/>
        <dbReference type="ChEBI" id="CHEBI:74415"/>
        <dbReference type="EC" id="2.5.1.75"/>
    </reaction>
</comment>
<comment type="cofactor">
    <cofactor evidence="1">
        <name>Mg(2+)</name>
        <dbReference type="ChEBI" id="CHEBI:18420"/>
    </cofactor>
</comment>
<comment type="subunit">
    <text evidence="1">Monomer.</text>
</comment>
<comment type="similarity">
    <text evidence="1">Belongs to the IPP transferase family.</text>
</comment>
<name>MIAA_ACIBS</name>
<organism>
    <name type="scientific">Acinetobacter baumannii (strain SDF)</name>
    <dbReference type="NCBI Taxonomy" id="509170"/>
    <lineage>
        <taxon>Bacteria</taxon>
        <taxon>Pseudomonadati</taxon>
        <taxon>Pseudomonadota</taxon>
        <taxon>Gammaproteobacteria</taxon>
        <taxon>Moraxellales</taxon>
        <taxon>Moraxellaceae</taxon>
        <taxon>Acinetobacter</taxon>
        <taxon>Acinetobacter calcoaceticus/baumannii complex</taxon>
    </lineage>
</organism>
<reference key="1">
    <citation type="journal article" date="2008" name="PLoS ONE">
        <title>Comparative analysis of Acinetobacters: three genomes for three lifestyles.</title>
        <authorList>
            <person name="Vallenet D."/>
            <person name="Nordmann P."/>
            <person name="Barbe V."/>
            <person name="Poirel L."/>
            <person name="Mangenot S."/>
            <person name="Bataille E."/>
            <person name="Dossat C."/>
            <person name="Gas S."/>
            <person name="Kreimeyer A."/>
            <person name="Lenoble P."/>
            <person name="Oztas S."/>
            <person name="Poulain J."/>
            <person name="Segurens B."/>
            <person name="Robert C."/>
            <person name="Abergel C."/>
            <person name="Claverie J.-M."/>
            <person name="Raoult D."/>
            <person name="Medigue C."/>
            <person name="Weissenbach J."/>
            <person name="Cruveiller S."/>
        </authorList>
    </citation>
    <scope>NUCLEOTIDE SEQUENCE [LARGE SCALE GENOMIC DNA]</scope>
    <source>
        <strain>SDF</strain>
    </source>
</reference>